<protein>
    <recommendedName>
        <fullName evidence="1">Aspartate 1-decarboxylase</fullName>
        <ecNumber evidence="1">4.1.1.11</ecNumber>
    </recommendedName>
    <alternativeName>
        <fullName evidence="1">Aspartate alpha-decarboxylase</fullName>
    </alternativeName>
    <component>
        <recommendedName>
            <fullName evidence="1">Aspartate 1-decarboxylase beta chain</fullName>
        </recommendedName>
    </component>
    <component>
        <recommendedName>
            <fullName evidence="1">Aspartate 1-decarboxylase alpha chain</fullName>
        </recommendedName>
    </component>
</protein>
<dbReference type="EC" id="4.1.1.11" evidence="1"/>
<dbReference type="EMBL" id="AE000516">
    <property type="protein sequence ID" value="AAK48064.1"/>
    <property type="molecule type" value="Genomic_DNA"/>
</dbReference>
<dbReference type="PIR" id="B70955">
    <property type="entry name" value="B70955"/>
</dbReference>
<dbReference type="RefSeq" id="WP_003419523.1">
    <property type="nucleotide sequence ID" value="NZ_KK341227.1"/>
</dbReference>
<dbReference type="SMR" id="P9WIL2"/>
<dbReference type="KEGG" id="mtc:MT3706.1"/>
<dbReference type="PATRIC" id="fig|83331.31.peg.3989"/>
<dbReference type="HOGENOM" id="CLU_115305_2_0_11"/>
<dbReference type="UniPathway" id="UPA00028">
    <property type="reaction ID" value="UER00002"/>
</dbReference>
<dbReference type="Proteomes" id="UP000001020">
    <property type="component" value="Chromosome"/>
</dbReference>
<dbReference type="GO" id="GO:0005829">
    <property type="term" value="C:cytosol"/>
    <property type="evidence" value="ECO:0007669"/>
    <property type="project" value="TreeGrafter"/>
</dbReference>
<dbReference type="GO" id="GO:0004068">
    <property type="term" value="F:aspartate 1-decarboxylase activity"/>
    <property type="evidence" value="ECO:0007669"/>
    <property type="project" value="UniProtKB-UniRule"/>
</dbReference>
<dbReference type="GO" id="GO:0006523">
    <property type="term" value="P:alanine biosynthetic process"/>
    <property type="evidence" value="ECO:0007669"/>
    <property type="project" value="InterPro"/>
</dbReference>
<dbReference type="GO" id="GO:0015940">
    <property type="term" value="P:pantothenate biosynthetic process"/>
    <property type="evidence" value="ECO:0007669"/>
    <property type="project" value="UniProtKB-UniRule"/>
</dbReference>
<dbReference type="CDD" id="cd06919">
    <property type="entry name" value="Asp_decarbox"/>
    <property type="match status" value="1"/>
</dbReference>
<dbReference type="Gene3D" id="2.40.40.20">
    <property type="match status" value="1"/>
</dbReference>
<dbReference type="HAMAP" id="MF_00446">
    <property type="entry name" value="PanD"/>
    <property type="match status" value="1"/>
</dbReference>
<dbReference type="InterPro" id="IPR009010">
    <property type="entry name" value="Asp_de-COase-like_dom_sf"/>
</dbReference>
<dbReference type="InterPro" id="IPR003190">
    <property type="entry name" value="Asp_decarbox"/>
</dbReference>
<dbReference type="NCBIfam" id="TIGR00223">
    <property type="entry name" value="panD"/>
    <property type="match status" value="1"/>
</dbReference>
<dbReference type="PANTHER" id="PTHR21012">
    <property type="entry name" value="ASPARTATE 1-DECARBOXYLASE"/>
    <property type="match status" value="1"/>
</dbReference>
<dbReference type="PANTHER" id="PTHR21012:SF0">
    <property type="entry name" value="ASPARTATE 1-DECARBOXYLASE"/>
    <property type="match status" value="1"/>
</dbReference>
<dbReference type="Pfam" id="PF02261">
    <property type="entry name" value="Asp_decarbox"/>
    <property type="match status" value="1"/>
</dbReference>
<dbReference type="PIRSF" id="PIRSF006246">
    <property type="entry name" value="Asp_decarbox"/>
    <property type="match status" value="1"/>
</dbReference>
<dbReference type="SUPFAM" id="SSF50692">
    <property type="entry name" value="ADC-like"/>
    <property type="match status" value="1"/>
</dbReference>
<sequence>MLRTMLKSKIHRATVTCADLHYVGSVTIDADLMDAADLLEGEQVTIVDIDNGARLVTYAITGERGSGVIGINGAAAHLVHPGDLVILIAYATMDDARARTYQPRIVFVDAYNKPIDMGHDPAFVPENAGELLDPRLGVG</sequence>
<proteinExistence type="inferred from homology"/>
<comment type="function">
    <text evidence="1">Catalyzes the pyruvoyl-dependent decarboxylation of aspartate to produce beta-alanine.</text>
</comment>
<comment type="catalytic activity">
    <reaction evidence="1">
        <text>L-aspartate + H(+) = beta-alanine + CO2</text>
        <dbReference type="Rhea" id="RHEA:19497"/>
        <dbReference type="ChEBI" id="CHEBI:15378"/>
        <dbReference type="ChEBI" id="CHEBI:16526"/>
        <dbReference type="ChEBI" id="CHEBI:29991"/>
        <dbReference type="ChEBI" id="CHEBI:57966"/>
        <dbReference type="EC" id="4.1.1.11"/>
    </reaction>
</comment>
<comment type="cofactor">
    <cofactor evidence="1">
        <name>pyruvate</name>
        <dbReference type="ChEBI" id="CHEBI:15361"/>
    </cofactor>
    <text evidence="1">Binds 1 pyruvoyl group covalently per subunit.</text>
</comment>
<comment type="pathway">
    <text evidence="1">Cofactor biosynthesis; (R)-pantothenate biosynthesis; beta-alanine from L-aspartate: step 1/1.</text>
</comment>
<comment type="subunit">
    <text evidence="1">Heterooctamer of four alpha and four beta subunits.</text>
</comment>
<comment type="subcellular location">
    <subcellularLocation>
        <location evidence="1">Cytoplasm</location>
    </subcellularLocation>
</comment>
<comment type="PTM">
    <text evidence="1">Is synthesized initially as an inactive proenzyme, which is activated by self-cleavage at a specific serine bond to produce a beta-subunit with a hydroxyl group at its C-terminus and an alpha-subunit with a pyruvoyl group at its N-terminus.</text>
</comment>
<comment type="similarity">
    <text evidence="1">Belongs to the PanD family.</text>
</comment>
<feature type="chain" id="PRO_0000427986" description="Aspartate 1-decarboxylase beta chain" evidence="1">
    <location>
        <begin position="1"/>
        <end position="24"/>
    </location>
</feature>
<feature type="chain" id="PRO_0000427987" description="Aspartate 1-decarboxylase alpha chain" evidence="1">
    <location>
        <begin position="25"/>
        <end position="139"/>
    </location>
</feature>
<feature type="active site" description="Schiff-base intermediate with substrate; via pyruvic acid" evidence="1">
    <location>
        <position position="25"/>
    </location>
</feature>
<feature type="active site" description="Proton donor" evidence="1">
    <location>
        <position position="58"/>
    </location>
</feature>
<feature type="binding site" evidence="1">
    <location>
        <position position="57"/>
    </location>
    <ligand>
        <name>substrate</name>
    </ligand>
</feature>
<feature type="binding site" evidence="1">
    <location>
        <begin position="73"/>
        <end position="75"/>
    </location>
    <ligand>
        <name>substrate</name>
    </ligand>
</feature>
<feature type="modified residue" description="Pyruvic acid (Ser)" evidence="1">
    <location>
        <position position="25"/>
    </location>
</feature>
<reference key="1">
    <citation type="journal article" date="2002" name="J. Bacteriol.">
        <title>Whole-genome comparison of Mycobacterium tuberculosis clinical and laboratory strains.</title>
        <authorList>
            <person name="Fleischmann R.D."/>
            <person name="Alland D."/>
            <person name="Eisen J.A."/>
            <person name="Carpenter L."/>
            <person name="White O."/>
            <person name="Peterson J.D."/>
            <person name="DeBoy R.T."/>
            <person name="Dodson R.J."/>
            <person name="Gwinn M.L."/>
            <person name="Haft D.H."/>
            <person name="Hickey E.K."/>
            <person name="Kolonay J.F."/>
            <person name="Nelson W.C."/>
            <person name="Umayam L.A."/>
            <person name="Ermolaeva M.D."/>
            <person name="Salzberg S.L."/>
            <person name="Delcher A."/>
            <person name="Utterback T.R."/>
            <person name="Weidman J.F."/>
            <person name="Khouri H.M."/>
            <person name="Gill J."/>
            <person name="Mikula A."/>
            <person name="Bishai W."/>
            <person name="Jacobs W.R. Jr."/>
            <person name="Venter J.C."/>
            <person name="Fraser C.M."/>
        </authorList>
    </citation>
    <scope>NUCLEOTIDE SEQUENCE [LARGE SCALE GENOMIC DNA]</scope>
    <source>
        <strain>CDC 1551 / Oshkosh</strain>
    </source>
</reference>
<gene>
    <name evidence="1" type="primary">panD</name>
    <name type="ordered locus">MT3706.1</name>
</gene>
<keyword id="KW-0068">Autocatalytic cleavage</keyword>
<keyword id="KW-0963">Cytoplasm</keyword>
<keyword id="KW-0210">Decarboxylase</keyword>
<keyword id="KW-0456">Lyase</keyword>
<keyword id="KW-0566">Pantothenate biosynthesis</keyword>
<keyword id="KW-0670">Pyruvate</keyword>
<keyword id="KW-1185">Reference proteome</keyword>
<keyword id="KW-0704">Schiff base</keyword>
<keyword id="KW-0865">Zymogen</keyword>
<accession>P9WIL2</accession>
<accession>L0TDA1</accession>
<accession>O06281</accession>
<accession>P65660</accession>
<name>PAND_MYCTO</name>
<evidence type="ECO:0000255" key="1">
    <source>
        <dbReference type="HAMAP-Rule" id="MF_00446"/>
    </source>
</evidence>
<organism>
    <name type="scientific">Mycobacterium tuberculosis (strain CDC 1551 / Oshkosh)</name>
    <dbReference type="NCBI Taxonomy" id="83331"/>
    <lineage>
        <taxon>Bacteria</taxon>
        <taxon>Bacillati</taxon>
        <taxon>Actinomycetota</taxon>
        <taxon>Actinomycetes</taxon>
        <taxon>Mycobacteriales</taxon>
        <taxon>Mycobacteriaceae</taxon>
        <taxon>Mycobacterium</taxon>
        <taxon>Mycobacterium tuberculosis complex</taxon>
    </lineage>
</organism>